<gene>
    <name type="primary">KDM4B</name>
    <name type="synonym">JHDM3B</name>
    <name type="synonym">JMJD2B</name>
    <name type="synonym">KIAA0876</name>
</gene>
<accession>O94953</accession>
<accession>B9EGN8</accession>
<accession>D6W631</accession>
<accession>O75274</accession>
<accession>Q6P3R5</accession>
<accession>Q9P1V1</accession>
<accession>Q9UF40</accession>
<proteinExistence type="evidence at protein level"/>
<dbReference type="EC" id="1.14.11.66" evidence="11"/>
<dbReference type="EMBL" id="AB020683">
    <property type="protein sequence ID" value="BAA74899.2"/>
    <property type="status" value="ALT_INIT"/>
    <property type="molecule type" value="mRNA"/>
</dbReference>
<dbReference type="EMBL" id="AC005595">
    <property type="protein sequence ID" value="AAC33799.1"/>
    <property type="status" value="ALT_SEQ"/>
    <property type="molecule type" value="Genomic_DNA"/>
</dbReference>
<dbReference type="EMBL" id="AC022517">
    <property type="protein sequence ID" value="AAF31271.1"/>
    <property type="molecule type" value="Genomic_DNA"/>
</dbReference>
<dbReference type="EMBL" id="CH471139">
    <property type="protein sequence ID" value="EAW69181.1"/>
    <property type="molecule type" value="Genomic_DNA"/>
</dbReference>
<dbReference type="EMBL" id="CH471139">
    <property type="protein sequence ID" value="EAW69183.1"/>
    <property type="molecule type" value="Genomic_DNA"/>
</dbReference>
<dbReference type="EMBL" id="BC063889">
    <property type="protein sequence ID" value="AAH63889.1"/>
    <property type="molecule type" value="mRNA"/>
</dbReference>
<dbReference type="EMBL" id="BC136611">
    <property type="protein sequence ID" value="AAI36612.1"/>
    <property type="molecule type" value="mRNA"/>
</dbReference>
<dbReference type="EMBL" id="AL133622">
    <property type="protein sequence ID" value="CAB63748.2"/>
    <property type="molecule type" value="mRNA"/>
</dbReference>
<dbReference type="CCDS" id="CCDS12138.1">
    <molecule id="O94953-1"/>
</dbReference>
<dbReference type="CCDS" id="CCDS92493.1">
    <molecule id="O94953-2"/>
</dbReference>
<dbReference type="PIR" id="T43460">
    <property type="entry name" value="T43460"/>
</dbReference>
<dbReference type="RefSeq" id="NP_001357022.1">
    <molecule id="O94953-2"/>
    <property type="nucleotide sequence ID" value="NM_001370093.1"/>
</dbReference>
<dbReference type="RefSeq" id="NP_055830.1">
    <property type="nucleotide sequence ID" value="NM_015015.2"/>
</dbReference>
<dbReference type="PDB" id="4LXL">
    <property type="method" value="X-ray"/>
    <property type="resolution" value="1.87 A"/>
    <property type="chains" value="A=1-348"/>
</dbReference>
<dbReference type="PDB" id="4UC4">
    <property type="method" value="X-ray"/>
    <property type="resolution" value="2.56 A"/>
    <property type="chains" value="A/B=917-1031"/>
</dbReference>
<dbReference type="PDB" id="7JM5">
    <property type="method" value="X-ray"/>
    <property type="resolution" value="2.70 A"/>
    <property type="chains" value="A/B=1-366"/>
</dbReference>
<dbReference type="PDB" id="9H44">
    <property type="method" value="X-ray"/>
    <property type="resolution" value="1.74 A"/>
    <property type="chains" value="A=915-1044"/>
</dbReference>
<dbReference type="PDBsum" id="4LXL"/>
<dbReference type="PDBsum" id="4UC4"/>
<dbReference type="PDBsum" id="7JM5"/>
<dbReference type="PDBsum" id="9H44"/>
<dbReference type="SMR" id="O94953"/>
<dbReference type="BioGRID" id="116669">
    <property type="interactions" value="69"/>
</dbReference>
<dbReference type="DIP" id="DIP-47283N"/>
<dbReference type="FunCoup" id="O94953">
    <property type="interactions" value="2456"/>
</dbReference>
<dbReference type="IntAct" id="O94953">
    <property type="interactions" value="36"/>
</dbReference>
<dbReference type="MINT" id="O94953"/>
<dbReference type="STRING" id="9606.ENSP00000159111"/>
<dbReference type="BindingDB" id="O94953"/>
<dbReference type="ChEMBL" id="CHEMBL3313832"/>
<dbReference type="CarbonylDB" id="O94953"/>
<dbReference type="GlyGen" id="O94953">
    <property type="glycosylation" value="1 site, 1 O-linked glycan (1 site)"/>
</dbReference>
<dbReference type="iPTMnet" id="O94953"/>
<dbReference type="PhosphoSitePlus" id="O94953"/>
<dbReference type="BioMuta" id="KDM4B"/>
<dbReference type="jPOST" id="O94953"/>
<dbReference type="MassIVE" id="O94953"/>
<dbReference type="PaxDb" id="9606-ENSP00000159111"/>
<dbReference type="PeptideAtlas" id="O94953"/>
<dbReference type="ProteomicsDB" id="50574">
    <molecule id="O94953-1"/>
</dbReference>
<dbReference type="ProteomicsDB" id="50575">
    <molecule id="O94953-2"/>
</dbReference>
<dbReference type="Pumba" id="O94953"/>
<dbReference type="ABCD" id="O94953">
    <property type="antibodies" value="1 sequenced antibody"/>
</dbReference>
<dbReference type="Antibodypedia" id="11548">
    <property type="antibodies" value="536 antibodies from 36 providers"/>
</dbReference>
<dbReference type="DNASU" id="23030"/>
<dbReference type="Ensembl" id="ENST00000381759.8">
    <molecule id="O94953-2"/>
    <property type="protein sequence ID" value="ENSP00000371178.3"/>
    <property type="gene ID" value="ENSG00000127663.16"/>
</dbReference>
<dbReference type="GeneID" id="23030"/>
<dbReference type="KEGG" id="hsa:23030"/>
<dbReference type="UCSC" id="uc002mbq.5">
    <molecule id="O94953-1"/>
    <property type="organism name" value="human"/>
</dbReference>
<dbReference type="AGR" id="HGNC:29136"/>
<dbReference type="CTD" id="23030"/>
<dbReference type="DisGeNET" id="23030"/>
<dbReference type="GeneCards" id="KDM4B"/>
<dbReference type="HGNC" id="HGNC:29136">
    <property type="gene designation" value="KDM4B"/>
</dbReference>
<dbReference type="HPA" id="ENSG00000127663">
    <property type="expression patterns" value="Low tissue specificity"/>
</dbReference>
<dbReference type="MalaCards" id="KDM4B"/>
<dbReference type="MIM" id="609765">
    <property type="type" value="gene"/>
</dbReference>
<dbReference type="MIM" id="619320">
    <property type="type" value="phenotype"/>
</dbReference>
<dbReference type="neXtProt" id="NX_O94953"/>
<dbReference type="OpenTargets" id="ENSG00000127663"/>
<dbReference type="Orphanet" id="528084">
    <property type="disease" value="Non-specific syndromic intellectual disability"/>
</dbReference>
<dbReference type="PharmGKB" id="PA164721452"/>
<dbReference type="VEuPathDB" id="HostDB:ENSG00000127663"/>
<dbReference type="eggNOG" id="KOG0958">
    <property type="taxonomic scope" value="Eukaryota"/>
</dbReference>
<dbReference type="GeneTree" id="ENSGT00940000159248"/>
<dbReference type="HOGENOM" id="CLU_001442_6_1_1"/>
<dbReference type="InParanoid" id="O94953"/>
<dbReference type="OrthoDB" id="9547406at2759"/>
<dbReference type="PAN-GO" id="O94953">
    <property type="GO annotations" value="3 GO annotations based on evolutionary models"/>
</dbReference>
<dbReference type="PhylomeDB" id="O94953"/>
<dbReference type="TreeFam" id="TF106449"/>
<dbReference type="BioCyc" id="MetaCyc:ENSG00000127663-MONOMER"/>
<dbReference type="BRENDA" id="1.14.11.27">
    <property type="organism ID" value="2681"/>
</dbReference>
<dbReference type="BRENDA" id="1.14.11.66">
    <property type="organism ID" value="2681"/>
</dbReference>
<dbReference type="BRENDA" id="1.14.11.69">
    <property type="organism ID" value="2681"/>
</dbReference>
<dbReference type="PathwayCommons" id="O94953"/>
<dbReference type="Reactome" id="R-HSA-3214842">
    <property type="pathway name" value="HDMs demethylate histones"/>
</dbReference>
<dbReference type="Reactome" id="R-HSA-5693565">
    <property type="pathway name" value="Recruitment and ATM-mediated phosphorylation of repair and signaling proteins at DNA double strand breaks"/>
</dbReference>
<dbReference type="Reactome" id="R-HSA-9018519">
    <property type="pathway name" value="Estrogen-dependent gene expression"/>
</dbReference>
<dbReference type="SignaLink" id="O94953"/>
<dbReference type="SIGNOR" id="O94953"/>
<dbReference type="BioGRID-ORCS" id="23030">
    <property type="hits" value="25 hits in 1167 CRISPR screens"/>
</dbReference>
<dbReference type="CD-CODE" id="3FEF42AA">
    <property type="entry name" value="Lysine demethylase condensate"/>
</dbReference>
<dbReference type="ChiTaRS" id="KDM4B">
    <property type="organism name" value="human"/>
</dbReference>
<dbReference type="EvolutionaryTrace" id="O94953"/>
<dbReference type="GeneWiki" id="JMJD2B"/>
<dbReference type="GenomeRNAi" id="23030"/>
<dbReference type="Pharos" id="O94953">
    <property type="development level" value="Tchem"/>
</dbReference>
<dbReference type="PRO" id="PR:O94953"/>
<dbReference type="Proteomes" id="UP000005640">
    <property type="component" value="Chromosome 19"/>
</dbReference>
<dbReference type="RNAct" id="O94953">
    <property type="molecule type" value="protein"/>
</dbReference>
<dbReference type="Bgee" id="ENSG00000127663">
    <property type="expression patterns" value="Expressed in cervix squamous epithelium and 210 other cell types or tissues"/>
</dbReference>
<dbReference type="ExpressionAtlas" id="O94953">
    <property type="expression patterns" value="baseline and differential"/>
</dbReference>
<dbReference type="GO" id="GO:0000785">
    <property type="term" value="C:chromatin"/>
    <property type="evidence" value="ECO:0000318"/>
    <property type="project" value="GO_Central"/>
</dbReference>
<dbReference type="GO" id="GO:0005654">
    <property type="term" value="C:nucleoplasm"/>
    <property type="evidence" value="ECO:0000304"/>
    <property type="project" value="Reactome"/>
</dbReference>
<dbReference type="GO" id="GO:0005634">
    <property type="term" value="C:nucleus"/>
    <property type="evidence" value="ECO:0000318"/>
    <property type="project" value="GO_Central"/>
</dbReference>
<dbReference type="GO" id="GO:0032452">
    <property type="term" value="F:histone demethylase activity"/>
    <property type="evidence" value="ECO:0000304"/>
    <property type="project" value="Reactome"/>
</dbReference>
<dbReference type="GO" id="GO:0051864">
    <property type="term" value="F:histone H3K36 demethylase activity"/>
    <property type="evidence" value="ECO:0000314"/>
    <property type="project" value="UniProtKB"/>
</dbReference>
<dbReference type="GO" id="GO:0032454">
    <property type="term" value="F:histone H3K9 demethylase activity"/>
    <property type="evidence" value="ECO:0000315"/>
    <property type="project" value="UniProtKB"/>
</dbReference>
<dbReference type="GO" id="GO:0140684">
    <property type="term" value="F:histone H3K9me2/H3K9me3 demethylase activity"/>
    <property type="evidence" value="ECO:0000314"/>
    <property type="project" value="UniProtKB"/>
</dbReference>
<dbReference type="GO" id="GO:0008270">
    <property type="term" value="F:zinc ion binding"/>
    <property type="evidence" value="ECO:0007669"/>
    <property type="project" value="UniProtKB-KW"/>
</dbReference>
<dbReference type="GO" id="GO:0007420">
    <property type="term" value="P:brain development"/>
    <property type="evidence" value="ECO:0000250"/>
    <property type="project" value="UniProtKB"/>
</dbReference>
<dbReference type="GO" id="GO:0006338">
    <property type="term" value="P:chromatin remodeling"/>
    <property type="evidence" value="ECO:0000318"/>
    <property type="project" value="GO_Central"/>
</dbReference>
<dbReference type="GO" id="GO:0010468">
    <property type="term" value="P:regulation of gene expression"/>
    <property type="evidence" value="ECO:0000318"/>
    <property type="project" value="GO_Central"/>
</dbReference>
<dbReference type="CDD" id="cd15714">
    <property type="entry name" value="ePHD_JMJD2B"/>
    <property type="match status" value="1"/>
</dbReference>
<dbReference type="CDD" id="cd15576">
    <property type="entry name" value="PHD_JMJD2B"/>
    <property type="match status" value="1"/>
</dbReference>
<dbReference type="CDD" id="cd20464">
    <property type="entry name" value="Tudor_JMJD2B_rpt1"/>
    <property type="match status" value="1"/>
</dbReference>
<dbReference type="CDD" id="cd20467">
    <property type="entry name" value="Tudor_JMJD2B_rpt2"/>
    <property type="match status" value="1"/>
</dbReference>
<dbReference type="FunFam" id="3.30.40.10:FF:000029">
    <property type="entry name" value="lysine-specific demethylase 4C isoform X1"/>
    <property type="match status" value="1"/>
</dbReference>
<dbReference type="FunFam" id="2.60.120.650:FF:000003">
    <property type="entry name" value="Lysine-specific demethylase 4D"/>
    <property type="match status" value="1"/>
</dbReference>
<dbReference type="FunFam" id="3.10.330.70:FF:000001">
    <property type="entry name" value="Putative lysine-specific demethylase 4a"/>
    <property type="match status" value="1"/>
</dbReference>
<dbReference type="Gene3D" id="2.30.30.140">
    <property type="match status" value="1"/>
</dbReference>
<dbReference type="Gene3D" id="3.10.330.70">
    <property type="match status" value="1"/>
</dbReference>
<dbReference type="Gene3D" id="2.60.120.650">
    <property type="entry name" value="Cupin"/>
    <property type="match status" value="1"/>
</dbReference>
<dbReference type="Gene3D" id="3.30.40.10">
    <property type="entry name" value="Zinc/RING finger domain, C3HC4 (zinc finger)"/>
    <property type="match status" value="2"/>
</dbReference>
<dbReference type="InterPro" id="IPR034732">
    <property type="entry name" value="EPHD"/>
</dbReference>
<dbReference type="InterPro" id="IPR003347">
    <property type="entry name" value="JmjC_dom"/>
</dbReference>
<dbReference type="InterPro" id="IPR003349">
    <property type="entry name" value="JmjN"/>
</dbReference>
<dbReference type="InterPro" id="IPR040477">
    <property type="entry name" value="KDM4-like_Tudor"/>
</dbReference>
<dbReference type="InterPro" id="IPR002999">
    <property type="entry name" value="Tudor"/>
</dbReference>
<dbReference type="InterPro" id="IPR047483">
    <property type="entry name" value="Tudor_KDM4B_rpt1"/>
</dbReference>
<dbReference type="InterPro" id="IPR011011">
    <property type="entry name" value="Znf_FYVE_PHD"/>
</dbReference>
<dbReference type="InterPro" id="IPR001965">
    <property type="entry name" value="Znf_PHD"/>
</dbReference>
<dbReference type="InterPro" id="IPR019787">
    <property type="entry name" value="Znf_PHD-finger"/>
</dbReference>
<dbReference type="InterPro" id="IPR013083">
    <property type="entry name" value="Znf_RING/FYVE/PHD"/>
</dbReference>
<dbReference type="PANTHER" id="PTHR10694">
    <property type="entry name" value="LYSINE-SPECIFIC DEMETHYLASE"/>
    <property type="match status" value="1"/>
</dbReference>
<dbReference type="PANTHER" id="PTHR10694:SF30">
    <property type="entry name" value="LYSINE-SPECIFIC DEMETHYLASE 4B"/>
    <property type="match status" value="1"/>
</dbReference>
<dbReference type="Pfam" id="PF02373">
    <property type="entry name" value="JmjC"/>
    <property type="match status" value="1"/>
</dbReference>
<dbReference type="Pfam" id="PF02375">
    <property type="entry name" value="JmjN"/>
    <property type="match status" value="1"/>
</dbReference>
<dbReference type="Pfam" id="PF13831">
    <property type="entry name" value="PHD_2"/>
    <property type="match status" value="1"/>
</dbReference>
<dbReference type="Pfam" id="PF18104">
    <property type="entry name" value="Tudor_2"/>
    <property type="match status" value="2"/>
</dbReference>
<dbReference type="Pfam" id="PF13832">
    <property type="entry name" value="zf-HC5HC2H_2"/>
    <property type="match status" value="1"/>
</dbReference>
<dbReference type="SMART" id="SM00558">
    <property type="entry name" value="JmjC"/>
    <property type="match status" value="1"/>
</dbReference>
<dbReference type="SMART" id="SM00545">
    <property type="entry name" value="JmjN"/>
    <property type="match status" value="1"/>
</dbReference>
<dbReference type="SMART" id="SM00249">
    <property type="entry name" value="PHD"/>
    <property type="match status" value="2"/>
</dbReference>
<dbReference type="SMART" id="SM00333">
    <property type="entry name" value="TUDOR"/>
    <property type="match status" value="2"/>
</dbReference>
<dbReference type="SUPFAM" id="SSF51197">
    <property type="entry name" value="Clavaminate synthase-like"/>
    <property type="match status" value="1"/>
</dbReference>
<dbReference type="SUPFAM" id="SSF57903">
    <property type="entry name" value="FYVE/PHD zinc finger"/>
    <property type="match status" value="1"/>
</dbReference>
<dbReference type="SUPFAM" id="SSF63748">
    <property type="entry name" value="Tudor/PWWP/MBT"/>
    <property type="match status" value="2"/>
</dbReference>
<dbReference type="PROSITE" id="PS51805">
    <property type="entry name" value="EPHD"/>
    <property type="match status" value="1"/>
</dbReference>
<dbReference type="PROSITE" id="PS51184">
    <property type="entry name" value="JMJC"/>
    <property type="match status" value="1"/>
</dbReference>
<dbReference type="PROSITE" id="PS51183">
    <property type="entry name" value="JMJN"/>
    <property type="match status" value="1"/>
</dbReference>
<comment type="function">
    <text evidence="3 11 13">Histone demethylase that specifically demethylates 'Lys-9' of histone H3, thereby playing a role in histone code. Does not demethylate histone H3 'Lys-4', H3 'Lys-27', H3 'Lys-36' nor H4 'Lys-20'. Only able to demethylate trimethylated H3 'Lys-9', with a weaker activity than KDM4A, KDM4C and KDM4D. Demethylation of Lys residue generates formaldehyde and succinate (PubMed:16603238, PubMed:28262558). Plays a critical role in the development of the central nervous system (CNS).</text>
</comment>
<comment type="catalytic activity">
    <reaction evidence="11">
        <text>N(6),N(6),N(6)-trimethyl-L-lysyl(9)-[histone H3] + 2 2-oxoglutarate + 2 O2 = N(6)-methyl-L-lysyl(9)-[histone H3] + 2 formaldehyde + 2 succinate + 2 CO2</text>
        <dbReference type="Rhea" id="RHEA:60200"/>
        <dbReference type="Rhea" id="RHEA-COMP:15538"/>
        <dbReference type="Rhea" id="RHEA-COMP:15542"/>
        <dbReference type="ChEBI" id="CHEBI:15379"/>
        <dbReference type="ChEBI" id="CHEBI:16526"/>
        <dbReference type="ChEBI" id="CHEBI:16810"/>
        <dbReference type="ChEBI" id="CHEBI:16842"/>
        <dbReference type="ChEBI" id="CHEBI:30031"/>
        <dbReference type="ChEBI" id="CHEBI:61929"/>
        <dbReference type="ChEBI" id="CHEBI:61961"/>
        <dbReference type="EC" id="1.14.11.66"/>
    </reaction>
</comment>
<comment type="cofactor">
    <cofactor evidence="1">
        <name>Fe(2+)</name>
        <dbReference type="ChEBI" id="CHEBI:29033"/>
    </cofactor>
    <text evidence="1">Binds 1 Fe(2+) ion per subunit.</text>
</comment>
<comment type="subcellular location">
    <subcellularLocation>
        <location evidence="4 10">Nucleus</location>
    </subcellularLocation>
</comment>
<comment type="alternative products">
    <event type="alternative splicing"/>
    <isoform>
        <id>O94953-1</id>
        <name>1</name>
        <sequence type="displayed"/>
    </isoform>
    <isoform>
        <id>O94953-2</id>
        <name>2</name>
        <sequence type="described" ref="VSP_018307 VSP_018308"/>
    </isoform>
</comment>
<comment type="domain">
    <text evidence="1">The 2 Tudor domains recognize and bind methylated histones. Double Tudor domain has an interdigitated structure and the unusual fold is required for its ability to bind methylated histone tails (By similarity).</text>
</comment>
<comment type="disease" evidence="14">
    <disease id="DI-06105">
        <name>Intellectual developmental disorder, autosomal dominant 65</name>
        <acronym>MRD65</acronym>
        <description>An autosomal dominant form of intellectual disability, a disorder characterized by significantly below average general intellectual functioning associated with impairments in adaptive behavior and manifested during the developmental period. MRD65 is characterized by delayed motor and speech acquisition, variably impaired intellectual development, behavioral abnormalities, and dysmorphic facial features. Additional variable features include feeding difficulties, hypotonia, and seizures.</description>
        <dbReference type="MIM" id="619320"/>
    </disease>
    <text>The disease is caused by variants affecting the gene represented in this entry.</text>
</comment>
<comment type="similarity">
    <text evidence="17">Belongs to the JHDM3 histone demethylase family.</text>
</comment>
<comment type="sequence caution" evidence="17">
    <conflict type="erroneous gene model prediction">
        <sequence resource="EMBL-CDS" id="AAC33799"/>
    </conflict>
</comment>
<comment type="sequence caution" evidence="17">
    <conflict type="erroneous initiation">
        <sequence resource="EMBL-CDS" id="BAA74899"/>
    </conflict>
    <text>Extended N-terminus.</text>
</comment>
<protein>
    <recommendedName>
        <fullName>Lysine-specific demethylase 4B</fullName>
        <ecNumber evidence="11">1.14.11.66</ecNumber>
    </recommendedName>
    <alternativeName>
        <fullName>JmjC domain-containing histone demethylation protein 3B</fullName>
    </alternativeName>
    <alternativeName>
        <fullName>Jumonji domain-containing protein 2B</fullName>
    </alternativeName>
    <alternativeName>
        <fullName evidence="17">[histone H3]-trimethyl-L-lysine(9) demethylase 4B</fullName>
    </alternativeName>
</protein>
<evidence type="ECO:0000250" key="1"/>
<evidence type="ECO:0000250" key="2">
    <source>
        <dbReference type="UniProtKB" id="B2RXH2"/>
    </source>
</evidence>
<evidence type="ECO:0000250" key="3">
    <source>
        <dbReference type="UniProtKB" id="Q91VY5"/>
    </source>
</evidence>
<evidence type="ECO:0000255" key="4">
    <source>
        <dbReference type="PROSITE-ProRule" id="PRU00537"/>
    </source>
</evidence>
<evidence type="ECO:0000255" key="5">
    <source>
        <dbReference type="PROSITE-ProRule" id="PRU00538"/>
    </source>
</evidence>
<evidence type="ECO:0000255" key="6">
    <source>
        <dbReference type="PROSITE-ProRule" id="PRU01146"/>
    </source>
</evidence>
<evidence type="ECO:0000256" key="7">
    <source>
        <dbReference type="SAM" id="MobiDB-lite"/>
    </source>
</evidence>
<evidence type="ECO:0000269" key="8">
    <source>
    </source>
</evidence>
<evidence type="ECO:0000269" key="9">
    <source>
    </source>
</evidence>
<evidence type="ECO:0000269" key="10">
    <source>
    </source>
</evidence>
<evidence type="ECO:0000269" key="11">
    <source>
    </source>
</evidence>
<evidence type="ECO:0000269" key="12">
    <source>
    </source>
</evidence>
<evidence type="ECO:0000269" key="13">
    <source>
    </source>
</evidence>
<evidence type="ECO:0000269" key="14">
    <source>
    </source>
</evidence>
<evidence type="ECO:0000269" key="15">
    <source ref="4"/>
</evidence>
<evidence type="ECO:0000303" key="16">
    <source>
    </source>
</evidence>
<evidence type="ECO:0000305" key="17"/>
<evidence type="ECO:0007744" key="18">
    <source>
    </source>
</evidence>
<evidence type="ECO:0007744" key="19">
    <source>
    </source>
</evidence>
<evidence type="ECO:0007744" key="20">
    <source>
    </source>
</evidence>
<evidence type="ECO:0007744" key="21">
    <source>
    </source>
</evidence>
<evidence type="ECO:0007829" key="22">
    <source>
        <dbReference type="PDB" id="4LXL"/>
    </source>
</evidence>
<evidence type="ECO:0007829" key="23">
    <source>
        <dbReference type="PDB" id="4UC4"/>
    </source>
</evidence>
<evidence type="ECO:0007829" key="24">
    <source>
        <dbReference type="PDB" id="7JM5"/>
    </source>
</evidence>
<evidence type="ECO:0007829" key="25">
    <source>
        <dbReference type="PDB" id="9H44"/>
    </source>
</evidence>
<reference key="1">
    <citation type="journal article" date="1998" name="DNA Res.">
        <title>Prediction of the coding sequences of unidentified human genes. XII. The complete sequences of 100 new cDNA clones from brain which code for large proteins in vitro.</title>
        <authorList>
            <person name="Nagase T."/>
            <person name="Ishikawa K."/>
            <person name="Suyama M."/>
            <person name="Kikuno R."/>
            <person name="Hirosawa M."/>
            <person name="Miyajima N."/>
            <person name="Tanaka A."/>
            <person name="Kotani H."/>
            <person name="Nomura N."/>
            <person name="Ohara O."/>
        </authorList>
    </citation>
    <scope>NUCLEOTIDE SEQUENCE [LARGE SCALE MRNA] (ISOFORM 1)</scope>
    <scope>VARIANT GLU-710</scope>
    <source>
        <tissue>Brain</tissue>
    </source>
</reference>
<reference key="2">
    <citation type="journal article" date="2002" name="DNA Res.">
        <title>Construction of expression-ready cDNA clones for KIAA genes: manual curation of 330 KIAA cDNA clones.</title>
        <authorList>
            <person name="Nakajima D."/>
            <person name="Okazaki N."/>
            <person name="Yamakawa H."/>
            <person name="Kikuno R."/>
            <person name="Ohara O."/>
            <person name="Nagase T."/>
        </authorList>
    </citation>
    <scope>SEQUENCE REVISION</scope>
</reference>
<reference key="3">
    <citation type="journal article" date="2004" name="Nature">
        <title>The DNA sequence and biology of human chromosome 19.</title>
        <authorList>
            <person name="Grimwood J."/>
            <person name="Gordon L.A."/>
            <person name="Olsen A.S."/>
            <person name="Terry A."/>
            <person name="Schmutz J."/>
            <person name="Lamerdin J.E."/>
            <person name="Hellsten U."/>
            <person name="Goodstein D."/>
            <person name="Couronne O."/>
            <person name="Tran-Gyamfi M."/>
            <person name="Aerts A."/>
            <person name="Altherr M."/>
            <person name="Ashworth L."/>
            <person name="Bajorek E."/>
            <person name="Black S."/>
            <person name="Branscomb E."/>
            <person name="Caenepeel S."/>
            <person name="Carrano A.V."/>
            <person name="Caoile C."/>
            <person name="Chan Y.M."/>
            <person name="Christensen M."/>
            <person name="Cleland C.A."/>
            <person name="Copeland A."/>
            <person name="Dalin E."/>
            <person name="Dehal P."/>
            <person name="Denys M."/>
            <person name="Detter J.C."/>
            <person name="Escobar J."/>
            <person name="Flowers D."/>
            <person name="Fotopulos D."/>
            <person name="Garcia C."/>
            <person name="Georgescu A.M."/>
            <person name="Glavina T."/>
            <person name="Gomez M."/>
            <person name="Gonzales E."/>
            <person name="Groza M."/>
            <person name="Hammon N."/>
            <person name="Hawkins T."/>
            <person name="Haydu L."/>
            <person name="Ho I."/>
            <person name="Huang W."/>
            <person name="Israni S."/>
            <person name="Jett J."/>
            <person name="Kadner K."/>
            <person name="Kimball H."/>
            <person name="Kobayashi A."/>
            <person name="Larionov V."/>
            <person name="Leem S.-H."/>
            <person name="Lopez F."/>
            <person name="Lou Y."/>
            <person name="Lowry S."/>
            <person name="Malfatti S."/>
            <person name="Martinez D."/>
            <person name="McCready P.M."/>
            <person name="Medina C."/>
            <person name="Morgan J."/>
            <person name="Nelson K."/>
            <person name="Nolan M."/>
            <person name="Ovcharenko I."/>
            <person name="Pitluck S."/>
            <person name="Pollard M."/>
            <person name="Popkie A.P."/>
            <person name="Predki P."/>
            <person name="Quan G."/>
            <person name="Ramirez L."/>
            <person name="Rash S."/>
            <person name="Retterer J."/>
            <person name="Rodriguez A."/>
            <person name="Rogers S."/>
            <person name="Salamov A."/>
            <person name="Salazar A."/>
            <person name="She X."/>
            <person name="Smith D."/>
            <person name="Slezak T."/>
            <person name="Solovyev V."/>
            <person name="Thayer N."/>
            <person name="Tice H."/>
            <person name="Tsai M."/>
            <person name="Ustaszewska A."/>
            <person name="Vo N."/>
            <person name="Wagner M."/>
            <person name="Wheeler J."/>
            <person name="Wu K."/>
            <person name="Xie G."/>
            <person name="Yang J."/>
            <person name="Dubchak I."/>
            <person name="Furey T.S."/>
            <person name="DeJong P."/>
            <person name="Dickson M."/>
            <person name="Gordon D."/>
            <person name="Eichler E.E."/>
            <person name="Pennacchio L.A."/>
            <person name="Richardson P."/>
            <person name="Stubbs L."/>
            <person name="Rokhsar D.S."/>
            <person name="Myers R.M."/>
            <person name="Rubin E.M."/>
            <person name="Lucas S.M."/>
        </authorList>
    </citation>
    <scope>NUCLEOTIDE SEQUENCE [LARGE SCALE GENOMIC DNA]</scope>
</reference>
<reference key="4">
    <citation type="submission" date="2005-09" db="EMBL/GenBank/DDBJ databases">
        <authorList>
            <person name="Mural R.J."/>
            <person name="Istrail S."/>
            <person name="Sutton G.G."/>
            <person name="Florea L."/>
            <person name="Halpern A.L."/>
            <person name="Mobarry C.M."/>
            <person name="Lippert R."/>
            <person name="Walenz B."/>
            <person name="Shatkay H."/>
            <person name="Dew I."/>
            <person name="Miller J.R."/>
            <person name="Flanigan M.J."/>
            <person name="Edwards N.J."/>
            <person name="Bolanos R."/>
            <person name="Fasulo D."/>
            <person name="Halldorsson B.V."/>
            <person name="Hannenhalli S."/>
            <person name="Turner R."/>
            <person name="Yooseph S."/>
            <person name="Lu F."/>
            <person name="Nusskern D.R."/>
            <person name="Shue B.C."/>
            <person name="Zheng X.H."/>
            <person name="Zhong F."/>
            <person name="Delcher A.L."/>
            <person name="Huson D.H."/>
            <person name="Kravitz S.A."/>
            <person name="Mouchard L."/>
            <person name="Reinert K."/>
            <person name="Remington K.A."/>
            <person name="Clark A.G."/>
            <person name="Waterman M.S."/>
            <person name="Eichler E.E."/>
            <person name="Adams M.D."/>
            <person name="Hunkapiller M.W."/>
            <person name="Myers E.W."/>
            <person name="Venter J.C."/>
        </authorList>
    </citation>
    <scope>NUCLEOTIDE SEQUENCE [LARGE SCALE GENOMIC DNA]</scope>
    <scope>VARIANT GLU-710</scope>
</reference>
<reference key="5">
    <citation type="journal article" date="2004" name="Genome Res.">
        <title>The status, quality, and expansion of the NIH full-length cDNA project: the Mammalian Gene Collection (MGC).</title>
        <authorList>
            <consortium name="The MGC Project Team"/>
        </authorList>
    </citation>
    <scope>NUCLEOTIDE SEQUENCE [LARGE SCALE MRNA] (ISOFORMS 1 AND 2)</scope>
    <scope>VARIANT GLU-710</scope>
    <source>
        <tissue>Testis</tissue>
    </source>
</reference>
<reference key="6">
    <citation type="journal article" date="2007" name="BMC Genomics">
        <title>The full-ORF clone resource of the German cDNA consortium.</title>
        <authorList>
            <person name="Bechtel S."/>
            <person name="Rosenfelder H."/>
            <person name="Duda A."/>
            <person name="Schmidt C.P."/>
            <person name="Ernst U."/>
            <person name="Wellenreuther R."/>
            <person name="Mehrle A."/>
            <person name="Schuster C."/>
            <person name="Bahr A."/>
            <person name="Bloecker H."/>
            <person name="Heubner D."/>
            <person name="Hoerlein A."/>
            <person name="Michel G."/>
            <person name="Wedler H."/>
            <person name="Koehrer K."/>
            <person name="Ottenwaelder B."/>
            <person name="Poustka A."/>
            <person name="Wiemann S."/>
            <person name="Schupp I."/>
        </authorList>
    </citation>
    <scope>NUCLEOTIDE SEQUENCE [LARGE SCALE MRNA] OF 487-1096</scope>
    <scope>VARIANT GLU-710</scope>
    <source>
        <tissue>Testis</tissue>
    </source>
</reference>
<reference key="7">
    <citation type="journal article" date="2005" name="J. Biol. Chem.">
        <title>Functional characterization of JMJD2A, a histone deacetylase- and retinoblastoma-binding protein.</title>
        <authorList>
            <person name="Gray S.G."/>
            <person name="Iglesias A.H."/>
            <person name="Lizcano F."/>
            <person name="Villanueva R."/>
            <person name="Camelo S."/>
            <person name="Jingu H."/>
            <person name="Teh B.T."/>
            <person name="Koibuchi N."/>
            <person name="Chin W.W."/>
            <person name="Kokkotou E."/>
            <person name="Dangond F."/>
        </authorList>
    </citation>
    <scope>SUBCELLULAR LOCATION</scope>
</reference>
<reference key="8">
    <citation type="journal article" date="2006" name="Cell">
        <title>Reversal of histone lysine trimethylation by the JMJD2 family of histone demethylases.</title>
        <authorList>
            <person name="Whetstine J.R."/>
            <person name="Nottke A."/>
            <person name="Lan F."/>
            <person name="Huarte M."/>
            <person name="Smolikov S."/>
            <person name="Chen Z."/>
            <person name="Spooner E."/>
            <person name="Li E."/>
            <person name="Zhang G."/>
            <person name="Colaiacovo M."/>
            <person name="Shi Y."/>
        </authorList>
    </citation>
    <scope>FUNCTION</scope>
    <scope>ENZYME ACTIVITY</scope>
</reference>
<reference key="9">
    <citation type="journal article" date="2009" name="Sci. Signal.">
        <title>Quantitative phosphoproteomic analysis of T cell receptor signaling reveals system-wide modulation of protein-protein interactions.</title>
        <authorList>
            <person name="Mayya V."/>
            <person name="Lundgren D.H."/>
            <person name="Hwang S.-I."/>
            <person name="Rezaul K."/>
            <person name="Wu L."/>
            <person name="Eng J.K."/>
            <person name="Rodionov V."/>
            <person name="Han D.K."/>
        </authorList>
    </citation>
    <scope>PHOSPHORYLATION [LARGE SCALE ANALYSIS] AT SER-566 AND THR-1065</scope>
    <scope>IDENTIFICATION BY MASS SPECTROMETRY [LARGE SCALE ANALYSIS]</scope>
    <source>
        <tissue>Leukemic T-cell</tissue>
    </source>
</reference>
<reference key="10">
    <citation type="journal article" date="2009" name="Science">
        <title>Lysine acetylation targets protein complexes and co-regulates major cellular functions.</title>
        <authorList>
            <person name="Choudhary C."/>
            <person name="Kumar C."/>
            <person name="Gnad F."/>
            <person name="Nielsen M.L."/>
            <person name="Rehman M."/>
            <person name="Walther T.C."/>
            <person name="Olsen J.V."/>
            <person name="Mann M."/>
        </authorList>
    </citation>
    <scope>ACETYLATION [LARGE SCALE ANALYSIS] AT LYS-602</scope>
    <scope>IDENTIFICATION BY MASS SPECTROMETRY [LARGE SCALE ANALYSIS]</scope>
</reference>
<reference key="11">
    <citation type="journal article" date="2013" name="J. Proteome Res.">
        <title>Toward a comprehensive characterization of a human cancer cell phosphoproteome.</title>
        <authorList>
            <person name="Zhou H."/>
            <person name="Di Palma S."/>
            <person name="Preisinger C."/>
            <person name="Peng M."/>
            <person name="Polat A.N."/>
            <person name="Heck A.J."/>
            <person name="Mohammed S."/>
        </authorList>
    </citation>
    <scope>PHOSPHORYLATION [LARGE SCALE ANALYSIS] AT SER-566 AND THR-1065</scope>
    <scope>IDENTIFICATION BY MASS SPECTROMETRY [LARGE SCALE ANALYSIS]</scope>
    <source>
        <tissue>Cervix carcinoma</tissue>
        <tissue>Erythroleukemia</tissue>
    </source>
</reference>
<reference key="12">
    <citation type="journal article" date="2014" name="J. Proteomics">
        <title>An enzyme assisted RP-RPLC approach for in-depth analysis of human liver phosphoproteome.</title>
        <authorList>
            <person name="Bian Y."/>
            <person name="Song C."/>
            <person name="Cheng K."/>
            <person name="Dong M."/>
            <person name="Wang F."/>
            <person name="Huang J."/>
            <person name="Sun D."/>
            <person name="Wang L."/>
            <person name="Ye M."/>
            <person name="Zou H."/>
        </authorList>
    </citation>
    <scope>PHOSPHORYLATION [LARGE SCALE ANALYSIS] AT SER-566</scope>
    <scope>IDENTIFICATION BY MASS SPECTROMETRY [LARGE SCALE ANALYSIS]</scope>
    <source>
        <tissue>Liver</tissue>
    </source>
</reference>
<reference key="13">
    <citation type="journal article" date="2017" name="Cell Chem. Biol.">
        <title>Potent and Selective KDM5 Inhibitor Stops Cellular Demethylation of H3K4me3 at Transcription Start Sites and Proliferation of MM1S Myeloma Cells.</title>
        <authorList>
            <person name="Tumber A."/>
            <person name="Nuzzi A."/>
            <person name="Hookway E.S."/>
            <person name="Hatch S.B."/>
            <person name="Velupillai S."/>
            <person name="Johansson C."/>
            <person name="Kawamura A."/>
            <person name="Savitsky P."/>
            <person name="Yapp C."/>
            <person name="Szykowska A."/>
            <person name="Wu N."/>
            <person name="Bountra C."/>
            <person name="Strain-Damerell C."/>
            <person name="Burgess-Brown N.A."/>
            <person name="Ruda G.F."/>
            <person name="Fedorov O."/>
            <person name="Munro S."/>
            <person name="England K.S."/>
            <person name="Nowak R.P."/>
            <person name="Schofield C.J."/>
            <person name="La Thangue N.B."/>
            <person name="Pawlyn C."/>
            <person name="Davies F."/>
            <person name="Morgan G."/>
            <person name="Athanasou N."/>
            <person name="Muller S."/>
            <person name="Oppermann U."/>
            <person name="Brennan P.E."/>
        </authorList>
    </citation>
    <scope>FUNCTION</scope>
    <scope>MUTAGENESIS OF 189-HIS--GLU-191</scope>
</reference>
<reference key="14">
    <citation type="journal article" date="2020" name="Am. J. Hum. Genet.">
        <title>Heterozygous variants in KDM4B lead to global developmental delay and neuroanatomical defects.</title>
        <authorList>
            <person name="Duncan A.R."/>
            <person name="Vitobello A."/>
            <person name="Collins S.C."/>
            <person name="Vancollie V.E."/>
            <person name="Lelliott C.J."/>
            <person name="Rodan L."/>
            <person name="Shi J."/>
            <person name="Seman A.R."/>
            <person name="Agolini E."/>
            <person name="Novelli A."/>
            <person name="Prontera P."/>
            <person name="Guillen Sacoto M.J."/>
            <person name="Santiago-Sim T."/>
            <person name="Trimouille A."/>
            <person name="Goizet C."/>
            <person name="Nizon M."/>
            <person name="Bruel A.L."/>
            <person name="Philippe C."/>
            <person name="Grant P.E."/>
            <person name="Wojcik M.H."/>
            <person name="Stoler J."/>
            <person name="Genetti C.A."/>
            <person name="van Dooren M.F."/>
            <person name="Maas S.M."/>
            <person name="Alders M."/>
            <person name="Faivre L."/>
            <person name="Sorlin A."/>
            <person name="Yoon G."/>
            <person name="Yalcin B."/>
            <person name="Agrawal P.B."/>
        </authorList>
    </citation>
    <scope>INVOLVEMENT IN MRD65</scope>
    <scope>VARIANTS MRD65 PRO-220; TRP-222; ARG-768 AND LEU-1095</scope>
</reference>
<organism>
    <name type="scientific">Homo sapiens</name>
    <name type="common">Human</name>
    <dbReference type="NCBI Taxonomy" id="9606"/>
    <lineage>
        <taxon>Eukaryota</taxon>
        <taxon>Metazoa</taxon>
        <taxon>Chordata</taxon>
        <taxon>Craniata</taxon>
        <taxon>Vertebrata</taxon>
        <taxon>Euteleostomi</taxon>
        <taxon>Mammalia</taxon>
        <taxon>Eutheria</taxon>
        <taxon>Euarchontoglires</taxon>
        <taxon>Primates</taxon>
        <taxon>Haplorrhini</taxon>
        <taxon>Catarrhini</taxon>
        <taxon>Hominidae</taxon>
        <taxon>Homo</taxon>
    </lineage>
</organism>
<sequence length="1096" mass="121897">MGSEDHGAQNPSCKIMTFRPTMEEFKDFNKYVAYIESQGAHRAGLAKIIPPKEWKPRQTYDDIDDVVIPAPIQQVVTGQSGLFTQYNIQKKAMTVGEYRRLANSEKYCTPRHQDFDDLERKYWKNLTFVSPIYGADISGSLYDDDVAQWNIGSLRTILDMVERECGTIIEGVNTPYLYFGMWKTTFAWHTEDMDLYSINYLHFGEPKSWYAIPPEHGKRLERLAIGFFPGSSQGCDAFLRHKMTLISPIILKKYGIPFSRITQEAGEFMITFPYGYHAGFNHGFNCAESTNFATLRWIDYGKVATQCTCRKDMVKISMDVFVRILQPERYELWKQGKDLTVLDHTRPTALTSPELSSWSASRASLKAKLLRRSHRKRSQPKKPKPEDPKFPGEGTAGAALLEEAGGSVKEEAGPEVDPEEEEEEPQPLPHGREAEGAEEDGRGKLRPTKAKSERKKKSFGLLPPQLPPPPAHFPSEEALWLPSPLEPPVLGPGPAAMEESPLPAPLNVVPPEVPSEELEAKPRPIIPMLYVVPRPGKAAFNQEHVSCQQAFEHFAQKGPTWKEPVSPMELTGPEDGAASSGAGRMETKARAGEGQAPSTFSKLKMEIKKSRRHPLGRPPTRSPLSVVKQEASSDEEASPFSGEEDVSDPDALRPLLSLQWKNRAASFQAERKFNAAAARTEPYCAICTLFYPYCQALQTEKEAPIASLGKGCPATLPSKSRQKTRPLIPEMCFTSGGENTEPLPANSYIGDDGTSPLIACGKCCLQVHASCYGIRPELVNEGWTCSRCAAHAWTAECCLCNLRGGALQMTTDRRWIHVICAIAVPEARFLNVIERHPVDISAIPEQRWKLKCVYCRKRMKKVSGACIQCSYEHCSTSFHVTCAHAAGVLMEPDDWPYVVSITCLKHKSGGHAVQLLRAVSLGQVVITKNRNGLYYRCRVIGAASQTCYEVNFDDGSYSDNLYPESITSRDCVQLGPPSEGELVELRWTDGNLYKAKFISSVTSHIYQVEFEDGSQLTVKRGDIFTLEEELPKRVRSRLSLSTGAPQEPAFSGEEAKAAKRPRVGTPLATEDSGRSQDYVAFVESLLQVQGRPGAPF</sequence>
<keyword id="KW-0002">3D-structure</keyword>
<keyword id="KW-0007">Acetylation</keyword>
<keyword id="KW-0025">Alternative splicing</keyword>
<keyword id="KW-0156">Chromatin regulator</keyword>
<keyword id="KW-0223">Dioxygenase</keyword>
<keyword id="KW-0225">Disease variant</keyword>
<keyword id="KW-0991">Intellectual disability</keyword>
<keyword id="KW-0408">Iron</keyword>
<keyword id="KW-0479">Metal-binding</keyword>
<keyword id="KW-0539">Nucleus</keyword>
<keyword id="KW-0560">Oxidoreductase</keyword>
<keyword id="KW-0597">Phosphoprotein</keyword>
<keyword id="KW-1267">Proteomics identification</keyword>
<keyword id="KW-1185">Reference proteome</keyword>
<keyword id="KW-0677">Repeat</keyword>
<keyword id="KW-0804">Transcription</keyword>
<keyword id="KW-0805">Transcription regulation</keyword>
<keyword id="KW-0862">Zinc</keyword>
<keyword id="KW-0863">Zinc-finger</keyword>
<feature type="chain" id="PRO_0000183175" description="Lysine-specific demethylase 4B">
    <location>
        <begin position="1"/>
        <end position="1096"/>
    </location>
</feature>
<feature type="domain" description="JmjN" evidence="4">
    <location>
        <begin position="15"/>
        <end position="57"/>
    </location>
</feature>
<feature type="domain" description="JmjC" evidence="5">
    <location>
        <begin position="146"/>
        <end position="309"/>
    </location>
</feature>
<feature type="domain" description="Tudor 1">
    <location>
        <begin position="917"/>
        <end position="974"/>
    </location>
</feature>
<feature type="domain" description="Tudor 2">
    <location>
        <begin position="975"/>
        <end position="1031"/>
    </location>
</feature>
<feature type="zinc finger region" description="PHD-type 1">
    <location>
        <begin position="731"/>
        <end position="789"/>
    </location>
</feature>
<feature type="zinc finger region" description="C2HC pre-PHD-type" evidence="6">
    <location>
        <begin position="794"/>
        <end position="827"/>
    </location>
</feature>
<feature type="zinc finger region" description="PHD-type 2" evidence="6">
    <location>
        <begin position="850"/>
        <end position="907"/>
    </location>
</feature>
<feature type="region of interest" description="Disordered" evidence="7">
    <location>
        <begin position="369"/>
        <end position="478"/>
    </location>
</feature>
<feature type="region of interest" description="Disordered" evidence="7">
    <location>
        <begin position="557"/>
        <end position="649"/>
    </location>
</feature>
<feature type="region of interest" description="Disordered" evidence="7">
    <location>
        <begin position="1037"/>
        <end position="1073"/>
    </location>
</feature>
<feature type="compositionally biased region" description="Basic residues" evidence="7">
    <location>
        <begin position="369"/>
        <end position="382"/>
    </location>
</feature>
<feature type="compositionally biased region" description="Low complexity" evidence="7">
    <location>
        <begin position="391"/>
        <end position="406"/>
    </location>
</feature>
<feature type="compositionally biased region" description="Acidic residues" evidence="7">
    <location>
        <begin position="413"/>
        <end position="425"/>
    </location>
</feature>
<feature type="compositionally biased region" description="Basic and acidic residues" evidence="7">
    <location>
        <begin position="430"/>
        <end position="443"/>
    </location>
</feature>
<feature type="compositionally biased region" description="Basic residues" evidence="7">
    <location>
        <begin position="444"/>
        <end position="458"/>
    </location>
</feature>
<feature type="compositionally biased region" description="Acidic residues" evidence="7">
    <location>
        <begin position="632"/>
        <end position="648"/>
    </location>
</feature>
<feature type="binding site" evidence="2">
    <location>
        <position position="133"/>
    </location>
    <ligand>
        <name>2-oxoglutarate</name>
        <dbReference type="ChEBI" id="CHEBI:16810"/>
    </ligand>
</feature>
<feature type="binding site" evidence="5">
    <location>
        <position position="189"/>
    </location>
    <ligand>
        <name>Fe cation</name>
        <dbReference type="ChEBI" id="CHEBI:24875"/>
        <note>catalytic</note>
    </ligand>
</feature>
<feature type="binding site" evidence="5">
    <location>
        <position position="191"/>
    </location>
    <ligand>
        <name>Fe cation</name>
        <dbReference type="ChEBI" id="CHEBI:24875"/>
        <note>catalytic</note>
    </ligand>
</feature>
<feature type="binding site" evidence="2">
    <location>
        <position position="199"/>
    </location>
    <ligand>
        <name>2-oxoglutarate</name>
        <dbReference type="ChEBI" id="CHEBI:16810"/>
    </ligand>
</feature>
<feature type="binding site" evidence="2">
    <location>
        <position position="207"/>
    </location>
    <ligand>
        <name>2-oxoglutarate</name>
        <dbReference type="ChEBI" id="CHEBI:16810"/>
    </ligand>
</feature>
<feature type="binding site" evidence="1">
    <location>
        <position position="235"/>
    </location>
    <ligand>
        <name>Zn(2+)</name>
        <dbReference type="ChEBI" id="CHEBI:29105"/>
    </ligand>
</feature>
<feature type="binding site" evidence="1">
    <location>
        <position position="241"/>
    </location>
    <ligand>
        <name>Zn(2+)</name>
        <dbReference type="ChEBI" id="CHEBI:29105"/>
    </ligand>
</feature>
<feature type="binding site" evidence="2">
    <location>
        <position position="242"/>
    </location>
    <ligand>
        <name>2-oxoglutarate</name>
        <dbReference type="ChEBI" id="CHEBI:16810"/>
    </ligand>
</feature>
<feature type="binding site" evidence="5">
    <location>
        <position position="277"/>
    </location>
    <ligand>
        <name>Fe cation</name>
        <dbReference type="ChEBI" id="CHEBI:24875"/>
        <note>catalytic</note>
    </ligand>
</feature>
<feature type="binding site" evidence="1">
    <location>
        <position position="307"/>
    </location>
    <ligand>
        <name>Zn(2+)</name>
        <dbReference type="ChEBI" id="CHEBI:29105"/>
    </ligand>
</feature>
<feature type="binding site" evidence="1">
    <location>
        <position position="309"/>
    </location>
    <ligand>
        <name>Zn(2+)</name>
        <dbReference type="ChEBI" id="CHEBI:29105"/>
    </ligand>
</feature>
<feature type="modified residue" description="Phosphoserine" evidence="19 20 21">
    <location>
        <position position="566"/>
    </location>
</feature>
<feature type="modified residue" description="N6-acetyllysine" evidence="18">
    <location>
        <position position="602"/>
    </location>
</feature>
<feature type="modified residue" description="Phosphothreonine" evidence="19 20">
    <location>
        <position position="1065"/>
    </location>
</feature>
<feature type="splice variant" id="VSP_018307" description="In isoform 2." evidence="16">
    <original>SHRKRSQPKKPKPEDPKFPGEGTAGAALLEEAGGSVKEEAGPEVDPEEEEEEPQPLPHGREAEGAEEDGRGKLRPT</original>
    <variation>TPPCVSPHRPSQPGIWCPPGGEAKASAASWLLTTRGHGDTEAGPGLGGDPLHAQSEGQASCVSTSRLRMATQDPCR</variation>
    <location>
        <begin position="373"/>
        <end position="448"/>
    </location>
</feature>
<feature type="splice variant" id="VSP_018308" description="In isoform 2." evidence="16">
    <location>
        <begin position="449"/>
        <end position="1096"/>
    </location>
</feature>
<feature type="sequence variant" id="VAR_026223" description="In dbSNP:rs11667206.">
    <original>N</original>
    <variation>T</variation>
    <location>
        <position position="29"/>
    </location>
</feature>
<feature type="sequence variant" id="VAR_085967" description="In MRD65." evidence="14">
    <original>L</original>
    <variation>P</variation>
    <location>
        <position position="220"/>
    </location>
</feature>
<feature type="sequence variant" id="VAR_085968" description="In MRD65." evidence="14">
    <original>R</original>
    <variation>W</variation>
    <location>
        <position position="222"/>
    </location>
</feature>
<feature type="sequence variant" id="VAR_026224" description="In dbSNP:rs2620836." evidence="8 9 12 15">
    <original>K</original>
    <variation>E</variation>
    <location>
        <position position="710"/>
    </location>
</feature>
<feature type="sequence variant" id="VAR_085969" description="In MRD65." evidence="14">
    <original>H</original>
    <variation>R</variation>
    <location>
        <position position="768"/>
    </location>
</feature>
<feature type="sequence variant" id="VAR_085970" description="In MRD65; uncertain significance." evidence="14">
    <original>P</original>
    <variation>L</variation>
    <location>
        <position position="1095"/>
    </location>
</feature>
<feature type="mutagenesis site" description="Abolishes lysine-specific histone demethylase activity." evidence="13">
    <original>HTE</original>
    <variation>ATA</variation>
    <location>
        <begin position="189"/>
        <end position="191"/>
    </location>
</feature>
<feature type="helix" evidence="22">
    <location>
        <begin position="22"/>
        <end position="25"/>
    </location>
</feature>
<feature type="helix" evidence="22">
    <location>
        <begin position="28"/>
        <end position="37"/>
    </location>
</feature>
<feature type="helix" evidence="22">
    <location>
        <begin position="40"/>
        <end position="43"/>
    </location>
</feature>
<feature type="strand" evidence="22">
    <location>
        <begin position="44"/>
        <end position="48"/>
    </location>
</feature>
<feature type="strand" evidence="24">
    <location>
        <begin position="60"/>
        <end position="62"/>
    </location>
</feature>
<feature type="helix" evidence="22">
    <location>
        <begin position="63"/>
        <end position="65"/>
    </location>
</feature>
<feature type="strand" evidence="22">
    <location>
        <begin position="67"/>
        <end position="70"/>
    </location>
</feature>
<feature type="strand" evidence="22">
    <location>
        <begin position="72"/>
        <end position="79"/>
    </location>
</feature>
<feature type="strand" evidence="22">
    <location>
        <begin position="82"/>
        <end position="89"/>
    </location>
</feature>
<feature type="helix" evidence="22">
    <location>
        <begin position="95"/>
        <end position="103"/>
    </location>
</feature>
<feature type="turn" evidence="22">
    <location>
        <begin position="105"/>
        <end position="107"/>
    </location>
</feature>
<feature type="helix" evidence="22">
    <location>
        <begin position="115"/>
        <end position="125"/>
    </location>
</feature>
<feature type="turn" evidence="24">
    <location>
        <begin position="126"/>
        <end position="128"/>
    </location>
</feature>
<feature type="strand" evidence="22">
    <location>
        <begin position="132"/>
        <end position="138"/>
    </location>
</feature>
<feature type="helix" evidence="22">
    <location>
        <begin position="157"/>
        <end position="159"/>
    </location>
</feature>
<feature type="helix" evidence="22">
    <location>
        <begin position="160"/>
        <end position="165"/>
    </location>
</feature>
<feature type="turn" evidence="22">
    <location>
        <begin position="170"/>
        <end position="172"/>
    </location>
</feature>
<feature type="strand" evidence="22">
    <location>
        <begin position="176"/>
        <end position="180"/>
    </location>
</feature>
<feature type="strand" evidence="22">
    <location>
        <begin position="185"/>
        <end position="189"/>
    </location>
</feature>
<feature type="helix" evidence="22">
    <location>
        <begin position="192"/>
        <end position="194"/>
    </location>
</feature>
<feature type="strand" evidence="22">
    <location>
        <begin position="196"/>
        <end position="205"/>
    </location>
</feature>
<feature type="strand" evidence="22">
    <location>
        <begin position="207"/>
        <end position="212"/>
    </location>
</feature>
<feature type="helix" evidence="22">
    <location>
        <begin position="214"/>
        <end position="216"/>
    </location>
</feature>
<feature type="helix" evidence="22">
    <location>
        <begin position="217"/>
        <end position="227"/>
    </location>
</feature>
<feature type="helix" evidence="22">
    <location>
        <begin position="229"/>
        <end position="234"/>
    </location>
</feature>
<feature type="helix" evidence="22">
    <location>
        <begin position="238"/>
        <end position="241"/>
    </location>
</feature>
<feature type="strand" evidence="22">
    <location>
        <begin position="244"/>
        <end position="246"/>
    </location>
</feature>
<feature type="helix" evidence="22">
    <location>
        <begin position="248"/>
        <end position="253"/>
    </location>
</feature>
<feature type="strand" evidence="22">
    <location>
        <begin position="259"/>
        <end position="263"/>
    </location>
</feature>
<feature type="strand" evidence="22">
    <location>
        <begin position="268"/>
        <end position="271"/>
    </location>
</feature>
<feature type="strand" evidence="22">
    <location>
        <begin position="276"/>
        <end position="281"/>
    </location>
</feature>
<feature type="strand" evidence="22">
    <location>
        <begin position="283"/>
        <end position="292"/>
    </location>
</feature>
<feature type="helix" evidence="22">
    <location>
        <begin position="295"/>
        <end position="297"/>
    </location>
</feature>
<feature type="helix" evidence="22">
    <location>
        <begin position="298"/>
        <end position="303"/>
    </location>
</feature>
<feature type="helix" evidence="22">
    <location>
        <begin position="319"/>
        <end position="325"/>
    </location>
</feature>
<feature type="helix" evidence="22">
    <location>
        <begin position="327"/>
        <end position="334"/>
    </location>
</feature>
<feature type="helix" evidence="24">
    <location>
        <begin position="353"/>
        <end position="360"/>
    </location>
</feature>
<feature type="strand" evidence="25">
    <location>
        <begin position="924"/>
        <end position="928"/>
    </location>
</feature>
<feature type="strand" evidence="25">
    <location>
        <begin position="934"/>
        <end position="952"/>
    </location>
</feature>
<feature type="strand" evidence="25">
    <location>
        <begin position="957"/>
        <end position="961"/>
    </location>
</feature>
<feature type="helix" evidence="25">
    <location>
        <begin position="963"/>
        <end position="965"/>
    </location>
</feature>
<feature type="strand" evidence="23">
    <location>
        <begin position="966"/>
        <end position="969"/>
    </location>
</feature>
<feature type="helix" evidence="25">
    <location>
        <begin position="971"/>
        <end position="974"/>
    </location>
</feature>
<feature type="strand" evidence="25">
    <location>
        <begin position="982"/>
        <end position="986"/>
    </location>
</feature>
<feature type="strand" evidence="25">
    <location>
        <begin position="992"/>
        <end position="1009"/>
    </location>
</feature>
<feature type="strand" evidence="25">
    <location>
        <begin position="1015"/>
        <end position="1019"/>
    </location>
</feature>
<feature type="helix" evidence="25">
    <location>
        <begin position="1020"/>
        <end position="1022"/>
    </location>
</feature>
<feature type="strand" evidence="25">
    <location>
        <begin position="1026"/>
        <end position="1028"/>
    </location>
</feature>
<feature type="helix" evidence="25">
    <location>
        <begin position="1032"/>
        <end position="1035"/>
    </location>
</feature>
<name>KDM4B_HUMAN</name>